<gene>
    <name evidence="1" type="primary">rpoA</name>
    <name type="ordered locus">Cbei_0180</name>
</gene>
<feature type="chain" id="PRO_1000075005" description="DNA-directed RNA polymerase subunit alpha">
    <location>
        <begin position="1"/>
        <end position="315"/>
    </location>
</feature>
<feature type="region of interest" description="Alpha N-terminal domain (alpha-NTD)" evidence="1">
    <location>
        <begin position="1"/>
        <end position="228"/>
    </location>
</feature>
<feature type="region of interest" description="Alpha C-terminal domain (alpha-CTD)" evidence="1">
    <location>
        <begin position="245"/>
        <end position="315"/>
    </location>
</feature>
<organism>
    <name type="scientific">Clostridium beijerinckii (strain ATCC 51743 / NCIMB 8052)</name>
    <name type="common">Clostridium acetobutylicum</name>
    <dbReference type="NCBI Taxonomy" id="290402"/>
    <lineage>
        <taxon>Bacteria</taxon>
        <taxon>Bacillati</taxon>
        <taxon>Bacillota</taxon>
        <taxon>Clostridia</taxon>
        <taxon>Eubacteriales</taxon>
        <taxon>Clostridiaceae</taxon>
        <taxon>Clostridium</taxon>
    </lineage>
</organism>
<evidence type="ECO:0000255" key="1">
    <source>
        <dbReference type="HAMAP-Rule" id="MF_00059"/>
    </source>
</evidence>
<name>RPOA_CLOB8</name>
<sequence length="315" mass="35123">MLEIEKPIIECIEANEDGTYGKYVVEPLERGYGITLGNALRRILLSSLPGVATTSVKIDGVLHEFSTVQGVKEDVTELILNIKSLALRMNGEGPKVIYIDAKGPGEVTGADIKTDGDVEVVNKNLHIATLDNDGRLYMELTVNKGRGYVTQNKNKSDELPISAIAVDSIYTPVKRVNFTVDNTRVGQITDYDKLTLEIWTNGTIKIDEAISLSAKILIEHFKLFMSLTDNTNDVEIMIEKEDDKKEKVLEMTVEELDLSVRSYNCLKRAGINTVQELATKSMDDMMKVRNLGKKSLEEVERKLKELGLALKLTEE</sequence>
<accession>A6LPU0</accession>
<protein>
    <recommendedName>
        <fullName evidence="1">DNA-directed RNA polymerase subunit alpha</fullName>
        <shortName evidence="1">RNAP subunit alpha</shortName>
        <ecNumber evidence="1">2.7.7.6</ecNumber>
    </recommendedName>
    <alternativeName>
        <fullName evidence="1">RNA polymerase subunit alpha</fullName>
    </alternativeName>
    <alternativeName>
        <fullName evidence="1">Transcriptase subunit alpha</fullName>
    </alternativeName>
</protein>
<keyword id="KW-0240">DNA-directed RNA polymerase</keyword>
<keyword id="KW-0548">Nucleotidyltransferase</keyword>
<keyword id="KW-0804">Transcription</keyword>
<keyword id="KW-0808">Transferase</keyword>
<comment type="function">
    <text evidence="1">DNA-dependent RNA polymerase catalyzes the transcription of DNA into RNA using the four ribonucleoside triphosphates as substrates.</text>
</comment>
<comment type="catalytic activity">
    <reaction evidence="1">
        <text>RNA(n) + a ribonucleoside 5'-triphosphate = RNA(n+1) + diphosphate</text>
        <dbReference type="Rhea" id="RHEA:21248"/>
        <dbReference type="Rhea" id="RHEA-COMP:14527"/>
        <dbReference type="Rhea" id="RHEA-COMP:17342"/>
        <dbReference type="ChEBI" id="CHEBI:33019"/>
        <dbReference type="ChEBI" id="CHEBI:61557"/>
        <dbReference type="ChEBI" id="CHEBI:140395"/>
        <dbReference type="EC" id="2.7.7.6"/>
    </reaction>
</comment>
<comment type="subunit">
    <text evidence="1">Homodimer. The RNAP catalytic core consists of 2 alpha, 1 beta, 1 beta' and 1 omega subunit. When a sigma factor is associated with the core the holoenzyme is formed, which can initiate transcription.</text>
</comment>
<comment type="domain">
    <text evidence="1">The N-terminal domain is essential for RNAP assembly and basal transcription, whereas the C-terminal domain is involved in interaction with transcriptional regulators and with upstream promoter elements.</text>
</comment>
<comment type="similarity">
    <text evidence="1">Belongs to the RNA polymerase alpha chain family.</text>
</comment>
<proteinExistence type="inferred from homology"/>
<reference key="1">
    <citation type="submission" date="2007-06" db="EMBL/GenBank/DDBJ databases">
        <title>Complete sequence of Clostridium beijerinckii NCIMB 8052.</title>
        <authorList>
            <consortium name="US DOE Joint Genome Institute"/>
            <person name="Copeland A."/>
            <person name="Lucas S."/>
            <person name="Lapidus A."/>
            <person name="Barry K."/>
            <person name="Detter J.C."/>
            <person name="Glavina del Rio T."/>
            <person name="Hammon N."/>
            <person name="Israni S."/>
            <person name="Dalin E."/>
            <person name="Tice H."/>
            <person name="Pitluck S."/>
            <person name="Sims D."/>
            <person name="Brettin T."/>
            <person name="Bruce D."/>
            <person name="Tapia R."/>
            <person name="Brainard J."/>
            <person name="Schmutz J."/>
            <person name="Larimer F."/>
            <person name="Land M."/>
            <person name="Hauser L."/>
            <person name="Kyrpides N."/>
            <person name="Mikhailova N."/>
            <person name="Bennet G."/>
            <person name="Cann I."/>
            <person name="Chen J.-S."/>
            <person name="Contreras A.L."/>
            <person name="Jones D."/>
            <person name="Kashket E."/>
            <person name="Mitchell W."/>
            <person name="Stoddard S."/>
            <person name="Schwarz W."/>
            <person name="Qureshi N."/>
            <person name="Young M."/>
            <person name="Shi Z."/>
            <person name="Ezeji T."/>
            <person name="White B."/>
            <person name="Blaschek H."/>
            <person name="Richardson P."/>
        </authorList>
    </citation>
    <scope>NUCLEOTIDE SEQUENCE [LARGE SCALE GENOMIC DNA]</scope>
    <source>
        <strain>ATCC 51743 / NCIMB 8052</strain>
    </source>
</reference>
<dbReference type="EC" id="2.7.7.6" evidence="1"/>
<dbReference type="EMBL" id="CP000721">
    <property type="protein sequence ID" value="ABR32370.1"/>
    <property type="molecule type" value="Genomic_DNA"/>
</dbReference>
<dbReference type="RefSeq" id="WP_011967533.1">
    <property type="nucleotide sequence ID" value="NC_009617.1"/>
</dbReference>
<dbReference type="SMR" id="A6LPU0"/>
<dbReference type="KEGG" id="cbe:Cbei_0180"/>
<dbReference type="eggNOG" id="COG0202">
    <property type="taxonomic scope" value="Bacteria"/>
</dbReference>
<dbReference type="HOGENOM" id="CLU_053084_0_1_9"/>
<dbReference type="Proteomes" id="UP000000565">
    <property type="component" value="Chromosome"/>
</dbReference>
<dbReference type="GO" id="GO:0005737">
    <property type="term" value="C:cytoplasm"/>
    <property type="evidence" value="ECO:0007669"/>
    <property type="project" value="UniProtKB-ARBA"/>
</dbReference>
<dbReference type="GO" id="GO:0000428">
    <property type="term" value="C:DNA-directed RNA polymerase complex"/>
    <property type="evidence" value="ECO:0007669"/>
    <property type="project" value="UniProtKB-KW"/>
</dbReference>
<dbReference type="GO" id="GO:0003677">
    <property type="term" value="F:DNA binding"/>
    <property type="evidence" value="ECO:0007669"/>
    <property type="project" value="UniProtKB-UniRule"/>
</dbReference>
<dbReference type="GO" id="GO:0003899">
    <property type="term" value="F:DNA-directed RNA polymerase activity"/>
    <property type="evidence" value="ECO:0007669"/>
    <property type="project" value="UniProtKB-UniRule"/>
</dbReference>
<dbReference type="GO" id="GO:0046983">
    <property type="term" value="F:protein dimerization activity"/>
    <property type="evidence" value="ECO:0007669"/>
    <property type="project" value="InterPro"/>
</dbReference>
<dbReference type="GO" id="GO:0006351">
    <property type="term" value="P:DNA-templated transcription"/>
    <property type="evidence" value="ECO:0007669"/>
    <property type="project" value="UniProtKB-UniRule"/>
</dbReference>
<dbReference type="CDD" id="cd06928">
    <property type="entry name" value="RNAP_alpha_NTD"/>
    <property type="match status" value="1"/>
</dbReference>
<dbReference type="FunFam" id="1.10.150.20:FF:000001">
    <property type="entry name" value="DNA-directed RNA polymerase subunit alpha"/>
    <property type="match status" value="1"/>
</dbReference>
<dbReference type="FunFam" id="2.170.120.12:FF:000001">
    <property type="entry name" value="DNA-directed RNA polymerase subunit alpha"/>
    <property type="match status" value="1"/>
</dbReference>
<dbReference type="Gene3D" id="1.10.150.20">
    <property type="entry name" value="5' to 3' exonuclease, C-terminal subdomain"/>
    <property type="match status" value="1"/>
</dbReference>
<dbReference type="Gene3D" id="2.170.120.12">
    <property type="entry name" value="DNA-directed RNA polymerase, insert domain"/>
    <property type="match status" value="1"/>
</dbReference>
<dbReference type="Gene3D" id="3.30.1360.10">
    <property type="entry name" value="RNA polymerase, RBP11-like subunit"/>
    <property type="match status" value="1"/>
</dbReference>
<dbReference type="HAMAP" id="MF_00059">
    <property type="entry name" value="RNApol_bact_RpoA"/>
    <property type="match status" value="1"/>
</dbReference>
<dbReference type="InterPro" id="IPR011262">
    <property type="entry name" value="DNA-dir_RNA_pol_insert"/>
</dbReference>
<dbReference type="InterPro" id="IPR011263">
    <property type="entry name" value="DNA-dir_RNA_pol_RpoA/D/Rpb3"/>
</dbReference>
<dbReference type="InterPro" id="IPR011773">
    <property type="entry name" value="DNA-dir_RpoA"/>
</dbReference>
<dbReference type="InterPro" id="IPR036603">
    <property type="entry name" value="RBP11-like"/>
</dbReference>
<dbReference type="InterPro" id="IPR011260">
    <property type="entry name" value="RNAP_asu_C"/>
</dbReference>
<dbReference type="InterPro" id="IPR036643">
    <property type="entry name" value="RNApol_insert_sf"/>
</dbReference>
<dbReference type="NCBIfam" id="NF003513">
    <property type="entry name" value="PRK05182.1-2"/>
    <property type="match status" value="1"/>
</dbReference>
<dbReference type="NCBIfam" id="NF003515">
    <property type="entry name" value="PRK05182.2-1"/>
    <property type="match status" value="1"/>
</dbReference>
<dbReference type="NCBIfam" id="NF003519">
    <property type="entry name" value="PRK05182.2-5"/>
    <property type="match status" value="1"/>
</dbReference>
<dbReference type="NCBIfam" id="TIGR02027">
    <property type="entry name" value="rpoA"/>
    <property type="match status" value="1"/>
</dbReference>
<dbReference type="Pfam" id="PF01000">
    <property type="entry name" value="RNA_pol_A_bac"/>
    <property type="match status" value="1"/>
</dbReference>
<dbReference type="Pfam" id="PF03118">
    <property type="entry name" value="RNA_pol_A_CTD"/>
    <property type="match status" value="1"/>
</dbReference>
<dbReference type="Pfam" id="PF01193">
    <property type="entry name" value="RNA_pol_L"/>
    <property type="match status" value="1"/>
</dbReference>
<dbReference type="SMART" id="SM00662">
    <property type="entry name" value="RPOLD"/>
    <property type="match status" value="1"/>
</dbReference>
<dbReference type="SUPFAM" id="SSF47789">
    <property type="entry name" value="C-terminal domain of RNA polymerase alpha subunit"/>
    <property type="match status" value="1"/>
</dbReference>
<dbReference type="SUPFAM" id="SSF56553">
    <property type="entry name" value="Insert subdomain of RNA polymerase alpha subunit"/>
    <property type="match status" value="1"/>
</dbReference>
<dbReference type="SUPFAM" id="SSF55257">
    <property type="entry name" value="RBP11-like subunits of RNA polymerase"/>
    <property type="match status" value="1"/>
</dbReference>